<comment type="function">
    <text evidence="1">The synthetic peptide has antifungal activity against B.cinerea (MIC=20 uM), F.oxysporum (MIC=20 uM), A.niger (MIC=41 uM), C.albicans strain 01U (MIC=13 uM), C.albicans strain 38U (MIC=7 uM), C.parapsilosis (MIC=105 uM), C.neoformans strain L26 (MIC=209 uM), C.neoformans strain L30 (MIC=209 uM) and T.rubrum (MIC=3 uM). Has no antibacterial or cytotoxic activity.</text>
</comment>
<comment type="mass spectrometry"/>
<organism>
    <name type="scientific">Cenchritis muricatus</name>
    <name type="common">Beaded periwinkle</name>
    <dbReference type="NCBI Taxonomy" id="197001"/>
    <lineage>
        <taxon>Eukaryota</taxon>
        <taxon>Metazoa</taxon>
        <taxon>Spiralia</taxon>
        <taxon>Lophotrochozoa</taxon>
        <taxon>Mollusca</taxon>
        <taxon>Gastropoda</taxon>
        <taxon>Caenogastropoda</taxon>
        <taxon>Littorinimorpha</taxon>
        <taxon>Littorinoidea</taxon>
        <taxon>Littorinidae</taxon>
        <taxon>Cenchritis</taxon>
    </lineage>
</organism>
<proteinExistence type="evidence at protein level"/>
<sequence>SRSELIVHQR</sequence>
<reference evidence="3" key="1">
    <citation type="journal article" date="2012" name="Biochimie">
        <title>Functional characterization of a synthetic hydrophilic antifungal peptide derived from the marine snail Cenchritis muricatus.</title>
        <authorList>
            <person name="Lopez-Abarrategui C."/>
            <person name="Alba A."/>
            <person name="Silva O.N."/>
            <person name="Reyes-Acosta O."/>
            <person name="Vasconcelos I.M."/>
            <person name="Oliveira J.T."/>
            <person name="Migliolo L."/>
            <person name="Costa M.P."/>
            <person name="Costa C.R."/>
            <person name="Silva M.R."/>
            <person name="Garay H.E."/>
            <person name="Dias S.C."/>
            <person name="Franco O.L."/>
            <person name="Otero-Gonzalez A.J."/>
        </authorList>
    </citation>
    <scope>PROTEIN SEQUENCE</scope>
    <scope>FUNCTION</scope>
    <scope>MASS SPECTROMETRY</scope>
</reference>
<evidence type="ECO:0000269" key="1">
    <source>
    </source>
</evidence>
<evidence type="ECO:0000303" key="2">
    <source>
    </source>
</evidence>
<evidence type="ECO:0000305" key="3"/>
<evidence type="ECO:0007829" key="4">
    <source>
        <dbReference type="PDB" id="2MP9"/>
    </source>
</evidence>
<name>AFP_CENMR</name>
<accession>B3EWI7</accession>
<feature type="peptide" id="PRO_0000417917" description="Antifungal peptide" evidence="1">
    <location>
        <begin position="1"/>
        <end position="10"/>
    </location>
</feature>
<feature type="non-terminal residue" evidence="2">
    <location>
        <position position="1"/>
    </location>
</feature>
<feature type="non-terminal residue" evidence="2">
    <location>
        <position position="10"/>
    </location>
</feature>
<feature type="helix" evidence="4">
    <location>
        <begin position="3"/>
        <end position="10"/>
    </location>
</feature>
<protein>
    <recommendedName>
        <fullName evidence="2">Antifungal peptide</fullName>
    </recommendedName>
    <alternativeName>
        <fullName evidence="2">Cm-p1</fullName>
    </alternativeName>
</protein>
<keyword id="KW-0002">3D-structure</keyword>
<keyword id="KW-0929">Antimicrobial</keyword>
<keyword id="KW-0903">Direct protein sequencing</keyword>
<keyword id="KW-0295">Fungicide</keyword>
<dbReference type="PDB" id="2MP9">
    <property type="method" value="NMR"/>
    <property type="chains" value="A=1-10"/>
</dbReference>
<dbReference type="PDB" id="6CTG">
    <property type="method" value="NMR"/>
    <property type="chains" value="A=1-10"/>
</dbReference>
<dbReference type="PDBsum" id="2MP9"/>
<dbReference type="PDBsum" id="6CTG"/>
<dbReference type="BMRB" id="B3EWI7"/>
<dbReference type="SMR" id="B3EWI7"/>
<dbReference type="EvolutionaryTrace" id="B3EWI7"/>
<dbReference type="GO" id="GO:0050832">
    <property type="term" value="P:defense response to fungus"/>
    <property type="evidence" value="ECO:0007669"/>
    <property type="project" value="UniProtKB-KW"/>
</dbReference>
<dbReference type="GO" id="GO:0031640">
    <property type="term" value="P:killing of cells of another organism"/>
    <property type="evidence" value="ECO:0007669"/>
    <property type="project" value="UniProtKB-KW"/>
</dbReference>